<proteinExistence type="inferred from homology"/>
<sequence>MAKRDYYEVLGISKSASADEIKKAYRKLSKQYHPDINKEAGADEKFKEISEAYEALSDPQKRAQYDQYGHVDPNQGFGGGGAGGGFGGGGFSGFEDIFDTFFGGGGRQQDPNAPRQGSDLQYTMRLKFKEAIFGKDAEIEIPREENCDTCHGSGAKPGTTPEKCSHCGGKGSINVEQNTPFGRVVNKRTCQYCNGTGKEIKEKCPTCHGKGRVTKTKKIKVKVPAGVNDGQQMRVSGEGEAGINGGPNGDLYVVFVVIPDEFFEREADDIYVEVPITFVQATLGDEIDVPTVHGKVRLKIPSGTQTGTTFRLRGKGVPHLRGNGTGDQHVIVKVIVPKKLDDKQKEILREFASTTGDKVDEQTSGFFDKMKRAFKGD</sequence>
<protein>
    <recommendedName>
        <fullName evidence="1">Chaperone protein DnaJ</fullName>
    </recommendedName>
</protein>
<dbReference type="EMBL" id="AL591979">
    <property type="protein sequence ID" value="CAC99550.1"/>
    <property type="molecule type" value="Genomic_DNA"/>
</dbReference>
<dbReference type="PIR" id="AH1258">
    <property type="entry name" value="AH1258"/>
</dbReference>
<dbReference type="RefSeq" id="NP_464997.1">
    <property type="nucleotide sequence ID" value="NC_003210.1"/>
</dbReference>
<dbReference type="RefSeq" id="WP_010990134.1">
    <property type="nucleotide sequence ID" value="NZ_CP149495.1"/>
</dbReference>
<dbReference type="SMR" id="P0DJM1"/>
<dbReference type="STRING" id="169963.gene:17594129"/>
<dbReference type="PaxDb" id="169963-lmo1472"/>
<dbReference type="EnsemblBacteria" id="CAC99550">
    <property type="protein sequence ID" value="CAC99550"/>
    <property type="gene ID" value="CAC99550"/>
</dbReference>
<dbReference type="GeneID" id="987063"/>
<dbReference type="KEGG" id="lmo:lmo1472"/>
<dbReference type="PATRIC" id="fig|169963.11.peg.1512"/>
<dbReference type="eggNOG" id="COG0484">
    <property type="taxonomic scope" value="Bacteria"/>
</dbReference>
<dbReference type="HOGENOM" id="CLU_017633_0_7_9"/>
<dbReference type="OrthoDB" id="9779889at2"/>
<dbReference type="PhylomeDB" id="P0DJM1"/>
<dbReference type="BioCyc" id="LMON169963:LMO1472-MONOMER"/>
<dbReference type="Proteomes" id="UP000000817">
    <property type="component" value="Chromosome"/>
</dbReference>
<dbReference type="GO" id="GO:0005737">
    <property type="term" value="C:cytoplasm"/>
    <property type="evidence" value="ECO:0000318"/>
    <property type="project" value="GO_Central"/>
</dbReference>
<dbReference type="GO" id="GO:0005524">
    <property type="term" value="F:ATP binding"/>
    <property type="evidence" value="ECO:0007669"/>
    <property type="project" value="InterPro"/>
</dbReference>
<dbReference type="GO" id="GO:0031072">
    <property type="term" value="F:heat shock protein binding"/>
    <property type="evidence" value="ECO:0007669"/>
    <property type="project" value="InterPro"/>
</dbReference>
<dbReference type="GO" id="GO:0051082">
    <property type="term" value="F:unfolded protein binding"/>
    <property type="evidence" value="ECO:0000318"/>
    <property type="project" value="GO_Central"/>
</dbReference>
<dbReference type="GO" id="GO:0008270">
    <property type="term" value="F:zinc ion binding"/>
    <property type="evidence" value="ECO:0007669"/>
    <property type="project" value="UniProtKB-UniRule"/>
</dbReference>
<dbReference type="GO" id="GO:0051085">
    <property type="term" value="P:chaperone cofactor-dependent protein refolding"/>
    <property type="evidence" value="ECO:0000318"/>
    <property type="project" value="GO_Central"/>
</dbReference>
<dbReference type="GO" id="GO:0006260">
    <property type="term" value="P:DNA replication"/>
    <property type="evidence" value="ECO:0007669"/>
    <property type="project" value="UniProtKB-KW"/>
</dbReference>
<dbReference type="GO" id="GO:0042026">
    <property type="term" value="P:protein refolding"/>
    <property type="evidence" value="ECO:0000318"/>
    <property type="project" value="GO_Central"/>
</dbReference>
<dbReference type="GO" id="GO:0009408">
    <property type="term" value="P:response to heat"/>
    <property type="evidence" value="ECO:0007669"/>
    <property type="project" value="InterPro"/>
</dbReference>
<dbReference type="CDD" id="cd06257">
    <property type="entry name" value="DnaJ"/>
    <property type="match status" value="1"/>
</dbReference>
<dbReference type="CDD" id="cd10747">
    <property type="entry name" value="DnaJ_C"/>
    <property type="match status" value="1"/>
</dbReference>
<dbReference type="CDD" id="cd10719">
    <property type="entry name" value="DnaJ_zf"/>
    <property type="match status" value="1"/>
</dbReference>
<dbReference type="FunFam" id="1.10.287.110:FF:000031">
    <property type="entry name" value="Molecular chaperone DnaJ"/>
    <property type="match status" value="1"/>
</dbReference>
<dbReference type="FunFam" id="2.10.230.10:FF:000002">
    <property type="entry name" value="Molecular chaperone DnaJ"/>
    <property type="match status" value="1"/>
</dbReference>
<dbReference type="FunFam" id="2.60.260.20:FF:000004">
    <property type="entry name" value="Molecular chaperone DnaJ"/>
    <property type="match status" value="1"/>
</dbReference>
<dbReference type="FunFam" id="2.60.260.20:FF:000009">
    <property type="entry name" value="Putative Mitochondrial DnaJ chaperone"/>
    <property type="match status" value="1"/>
</dbReference>
<dbReference type="Gene3D" id="6.20.20.10">
    <property type="match status" value="2"/>
</dbReference>
<dbReference type="Gene3D" id="1.10.287.110">
    <property type="entry name" value="DnaJ domain"/>
    <property type="match status" value="1"/>
</dbReference>
<dbReference type="Gene3D" id="2.60.260.20">
    <property type="entry name" value="Urease metallochaperone UreE, N-terminal domain"/>
    <property type="match status" value="2"/>
</dbReference>
<dbReference type="HAMAP" id="MF_01152">
    <property type="entry name" value="DnaJ"/>
    <property type="match status" value="1"/>
</dbReference>
<dbReference type="InterPro" id="IPR012724">
    <property type="entry name" value="DnaJ"/>
</dbReference>
<dbReference type="InterPro" id="IPR002939">
    <property type="entry name" value="DnaJ_C"/>
</dbReference>
<dbReference type="InterPro" id="IPR001623">
    <property type="entry name" value="DnaJ_domain"/>
</dbReference>
<dbReference type="InterPro" id="IPR018253">
    <property type="entry name" value="DnaJ_domain_CS"/>
</dbReference>
<dbReference type="InterPro" id="IPR008971">
    <property type="entry name" value="HSP40/DnaJ_pept-bd"/>
</dbReference>
<dbReference type="InterPro" id="IPR001305">
    <property type="entry name" value="HSP_DnaJ_Cys-rich_dom"/>
</dbReference>
<dbReference type="InterPro" id="IPR036410">
    <property type="entry name" value="HSP_DnaJ_Cys-rich_dom_sf"/>
</dbReference>
<dbReference type="InterPro" id="IPR036869">
    <property type="entry name" value="J_dom_sf"/>
</dbReference>
<dbReference type="NCBIfam" id="TIGR02349">
    <property type="entry name" value="DnaJ_bact"/>
    <property type="match status" value="1"/>
</dbReference>
<dbReference type="NCBIfam" id="NF008035">
    <property type="entry name" value="PRK10767.1"/>
    <property type="match status" value="1"/>
</dbReference>
<dbReference type="NCBIfam" id="NF010869">
    <property type="entry name" value="PRK14276.1"/>
    <property type="match status" value="1"/>
</dbReference>
<dbReference type="NCBIfam" id="NF010873">
    <property type="entry name" value="PRK14280.1"/>
    <property type="match status" value="1"/>
</dbReference>
<dbReference type="PANTHER" id="PTHR43096:SF48">
    <property type="entry name" value="CHAPERONE PROTEIN DNAJ"/>
    <property type="match status" value="1"/>
</dbReference>
<dbReference type="PANTHER" id="PTHR43096">
    <property type="entry name" value="DNAJ HOMOLOG 1, MITOCHONDRIAL-RELATED"/>
    <property type="match status" value="1"/>
</dbReference>
<dbReference type="Pfam" id="PF00226">
    <property type="entry name" value="DnaJ"/>
    <property type="match status" value="1"/>
</dbReference>
<dbReference type="Pfam" id="PF01556">
    <property type="entry name" value="DnaJ_C"/>
    <property type="match status" value="1"/>
</dbReference>
<dbReference type="Pfam" id="PF00684">
    <property type="entry name" value="DnaJ_CXXCXGXG"/>
    <property type="match status" value="1"/>
</dbReference>
<dbReference type="PRINTS" id="PR00625">
    <property type="entry name" value="JDOMAIN"/>
</dbReference>
<dbReference type="SMART" id="SM00271">
    <property type="entry name" value="DnaJ"/>
    <property type="match status" value="1"/>
</dbReference>
<dbReference type="SUPFAM" id="SSF46565">
    <property type="entry name" value="Chaperone J-domain"/>
    <property type="match status" value="1"/>
</dbReference>
<dbReference type="SUPFAM" id="SSF57938">
    <property type="entry name" value="DnaJ/Hsp40 cysteine-rich domain"/>
    <property type="match status" value="1"/>
</dbReference>
<dbReference type="SUPFAM" id="SSF49493">
    <property type="entry name" value="HSP40/DnaJ peptide-binding domain"/>
    <property type="match status" value="2"/>
</dbReference>
<dbReference type="PROSITE" id="PS00636">
    <property type="entry name" value="DNAJ_1"/>
    <property type="match status" value="1"/>
</dbReference>
<dbReference type="PROSITE" id="PS50076">
    <property type="entry name" value="DNAJ_2"/>
    <property type="match status" value="1"/>
</dbReference>
<dbReference type="PROSITE" id="PS51188">
    <property type="entry name" value="ZF_CR"/>
    <property type="match status" value="1"/>
</dbReference>
<accession>P0DJM1</accession>
<accession>Q9S5A3</accession>
<gene>
    <name evidence="1" type="primary">dnaJ</name>
    <name type="ordered locus">lmo1472</name>
</gene>
<keyword id="KW-0143">Chaperone</keyword>
<keyword id="KW-0963">Cytoplasm</keyword>
<keyword id="KW-0235">DNA replication</keyword>
<keyword id="KW-0479">Metal-binding</keyword>
<keyword id="KW-1185">Reference proteome</keyword>
<keyword id="KW-0677">Repeat</keyword>
<keyword id="KW-0346">Stress response</keyword>
<keyword id="KW-0862">Zinc</keyword>
<keyword id="KW-0863">Zinc-finger</keyword>
<feature type="chain" id="PRO_0000070815" description="Chaperone protein DnaJ">
    <location>
        <begin position="1"/>
        <end position="377"/>
    </location>
</feature>
<feature type="domain" description="J" evidence="1">
    <location>
        <begin position="5"/>
        <end position="69"/>
    </location>
</feature>
<feature type="repeat" description="CXXCXGXG motif">
    <location>
        <begin position="147"/>
        <end position="154"/>
    </location>
</feature>
<feature type="repeat" description="CXXCXGXG motif">
    <location>
        <begin position="164"/>
        <end position="171"/>
    </location>
</feature>
<feature type="repeat" description="CXXCXGXG motif">
    <location>
        <begin position="190"/>
        <end position="197"/>
    </location>
</feature>
<feature type="repeat" description="CXXCXGXG motif">
    <location>
        <begin position="204"/>
        <end position="211"/>
    </location>
</feature>
<feature type="zinc finger region" description="CR-type" evidence="1">
    <location>
        <begin position="134"/>
        <end position="216"/>
    </location>
</feature>
<feature type="binding site" evidence="1">
    <location>
        <position position="147"/>
    </location>
    <ligand>
        <name>Zn(2+)</name>
        <dbReference type="ChEBI" id="CHEBI:29105"/>
        <label>1</label>
    </ligand>
</feature>
<feature type="binding site" evidence="1">
    <location>
        <position position="150"/>
    </location>
    <ligand>
        <name>Zn(2+)</name>
        <dbReference type="ChEBI" id="CHEBI:29105"/>
        <label>1</label>
    </ligand>
</feature>
<feature type="binding site" evidence="1">
    <location>
        <position position="164"/>
    </location>
    <ligand>
        <name>Zn(2+)</name>
        <dbReference type="ChEBI" id="CHEBI:29105"/>
        <label>2</label>
    </ligand>
</feature>
<feature type="binding site" evidence="1">
    <location>
        <position position="167"/>
    </location>
    <ligand>
        <name>Zn(2+)</name>
        <dbReference type="ChEBI" id="CHEBI:29105"/>
        <label>2</label>
    </ligand>
</feature>
<feature type="binding site" evidence="1">
    <location>
        <position position="190"/>
    </location>
    <ligand>
        <name>Zn(2+)</name>
        <dbReference type="ChEBI" id="CHEBI:29105"/>
        <label>2</label>
    </ligand>
</feature>
<feature type="binding site" evidence="1">
    <location>
        <position position="193"/>
    </location>
    <ligand>
        <name>Zn(2+)</name>
        <dbReference type="ChEBI" id="CHEBI:29105"/>
        <label>2</label>
    </ligand>
</feature>
<feature type="binding site" evidence="1">
    <location>
        <position position="204"/>
    </location>
    <ligand>
        <name>Zn(2+)</name>
        <dbReference type="ChEBI" id="CHEBI:29105"/>
        <label>1</label>
    </ligand>
</feature>
<feature type="binding site" evidence="1">
    <location>
        <position position="207"/>
    </location>
    <ligand>
        <name>Zn(2+)</name>
        <dbReference type="ChEBI" id="CHEBI:29105"/>
        <label>1</label>
    </ligand>
</feature>
<organism>
    <name type="scientific">Listeria monocytogenes serovar 1/2a (strain ATCC BAA-679 / EGD-e)</name>
    <dbReference type="NCBI Taxonomy" id="169963"/>
    <lineage>
        <taxon>Bacteria</taxon>
        <taxon>Bacillati</taxon>
        <taxon>Bacillota</taxon>
        <taxon>Bacilli</taxon>
        <taxon>Bacillales</taxon>
        <taxon>Listeriaceae</taxon>
        <taxon>Listeria</taxon>
    </lineage>
</organism>
<evidence type="ECO:0000255" key="1">
    <source>
        <dbReference type="HAMAP-Rule" id="MF_01152"/>
    </source>
</evidence>
<name>DNAJ_LISMO</name>
<comment type="function">
    <text evidence="1">Participates actively in the response to hyperosmotic and heat shock by preventing the aggregation of stress-denatured proteins and by disaggregating proteins, also in an autonomous, DnaK-independent fashion. Unfolded proteins bind initially to DnaJ; upon interaction with the DnaJ-bound protein, DnaK hydrolyzes its bound ATP, resulting in the formation of a stable complex. GrpE releases ADP from DnaK; ATP binding to DnaK triggers the release of the substrate protein, thus completing the reaction cycle. Several rounds of ATP-dependent interactions between DnaJ, DnaK and GrpE are required for fully efficient folding. Also involved, together with DnaK and GrpE, in the DNA replication of plasmids through activation of initiation proteins.</text>
</comment>
<comment type="cofactor">
    <cofactor evidence="1">
        <name>Zn(2+)</name>
        <dbReference type="ChEBI" id="CHEBI:29105"/>
    </cofactor>
    <text evidence="1">Binds 2 Zn(2+) ions per monomer.</text>
</comment>
<comment type="subunit">
    <text evidence="1">Homodimer.</text>
</comment>
<comment type="subcellular location">
    <subcellularLocation>
        <location evidence="1">Cytoplasm</location>
    </subcellularLocation>
</comment>
<comment type="domain">
    <text evidence="1">The J domain is necessary and sufficient to stimulate DnaK ATPase activity. Zinc center 1 plays an important role in the autonomous, DnaK-independent chaperone activity of DnaJ. Zinc center 2 is essential for interaction with DnaK and for DnaJ activity.</text>
</comment>
<comment type="similarity">
    <text evidence="1">Belongs to the DnaJ family.</text>
</comment>
<reference key="1">
    <citation type="journal article" date="2001" name="Science">
        <title>Comparative genomics of Listeria species.</title>
        <authorList>
            <person name="Glaser P."/>
            <person name="Frangeul L."/>
            <person name="Buchrieser C."/>
            <person name="Rusniok C."/>
            <person name="Amend A."/>
            <person name="Baquero F."/>
            <person name="Berche P."/>
            <person name="Bloecker H."/>
            <person name="Brandt P."/>
            <person name="Chakraborty T."/>
            <person name="Charbit A."/>
            <person name="Chetouani F."/>
            <person name="Couve E."/>
            <person name="de Daruvar A."/>
            <person name="Dehoux P."/>
            <person name="Domann E."/>
            <person name="Dominguez-Bernal G."/>
            <person name="Duchaud E."/>
            <person name="Durant L."/>
            <person name="Dussurget O."/>
            <person name="Entian K.-D."/>
            <person name="Fsihi H."/>
            <person name="Garcia-del Portillo F."/>
            <person name="Garrido P."/>
            <person name="Gautier L."/>
            <person name="Goebel W."/>
            <person name="Gomez-Lopez N."/>
            <person name="Hain T."/>
            <person name="Hauf J."/>
            <person name="Jackson D."/>
            <person name="Jones L.-M."/>
            <person name="Kaerst U."/>
            <person name="Kreft J."/>
            <person name="Kuhn M."/>
            <person name="Kunst F."/>
            <person name="Kurapkat G."/>
            <person name="Madueno E."/>
            <person name="Maitournam A."/>
            <person name="Mata Vicente J."/>
            <person name="Ng E."/>
            <person name="Nedjari H."/>
            <person name="Nordsiek G."/>
            <person name="Novella S."/>
            <person name="de Pablos B."/>
            <person name="Perez-Diaz J.-C."/>
            <person name="Purcell R."/>
            <person name="Remmel B."/>
            <person name="Rose M."/>
            <person name="Schlueter T."/>
            <person name="Simoes N."/>
            <person name="Tierrez A."/>
            <person name="Vazquez-Boland J.-A."/>
            <person name="Voss H."/>
            <person name="Wehland J."/>
            <person name="Cossart P."/>
        </authorList>
    </citation>
    <scope>NUCLEOTIDE SEQUENCE [LARGE SCALE GENOMIC DNA]</scope>
    <source>
        <strain>ATCC BAA-679 / EGD-e</strain>
    </source>
</reference>